<organism>
    <name type="scientific">Moorella thermoacetica (strain ATCC 39073 / JCM 9320)</name>
    <dbReference type="NCBI Taxonomy" id="264732"/>
    <lineage>
        <taxon>Bacteria</taxon>
        <taxon>Bacillati</taxon>
        <taxon>Bacillota</taxon>
        <taxon>Clostridia</taxon>
        <taxon>Moorellales</taxon>
        <taxon>Moorellaceae</taxon>
        <taxon>Moorella</taxon>
    </lineage>
</organism>
<sequence length="311" mass="33681">MRLVFMGTPDFAVPSLQALVAAGHEFAAVITQPDRPRGRGKKLLPPPVKSTALAAGLPVRQPSDMKDREFLEDLRLLQPELIVVVAFGRILSREILDLPARGCVNLHASLLPRYRGAAPIHRAVMNGEVETGVTTMWMAPQLDAGDIILQEKLPIPPEATTGEIHDRLAEVGAGLLVHTLELIAASRAPRLPQDEALATYAPPLKPEEEVIHWEQPAQVIYNQIRGLNPWPGAYTLRSGERLKIYGARLTDPSAIGRAGRVVEVGREGFVVQAGTGRLLVTSVQPPGKKIMPASAYLQGYPMVPGEILGCV</sequence>
<protein>
    <recommendedName>
        <fullName evidence="1">Methionyl-tRNA formyltransferase</fullName>
        <ecNumber evidence="1">2.1.2.9</ecNumber>
    </recommendedName>
</protein>
<evidence type="ECO:0000255" key="1">
    <source>
        <dbReference type="HAMAP-Rule" id="MF_00182"/>
    </source>
</evidence>
<proteinExistence type="inferred from homology"/>
<name>FMT_MOOTA</name>
<keyword id="KW-0648">Protein biosynthesis</keyword>
<keyword id="KW-0808">Transferase</keyword>
<accession>Q2RK24</accession>
<reference key="1">
    <citation type="journal article" date="2008" name="Environ. Microbiol.">
        <title>The complete genome sequence of Moorella thermoacetica (f. Clostridium thermoaceticum).</title>
        <authorList>
            <person name="Pierce E."/>
            <person name="Xie G."/>
            <person name="Barabote R.D."/>
            <person name="Saunders E."/>
            <person name="Han C.S."/>
            <person name="Detter J.C."/>
            <person name="Richardson P."/>
            <person name="Brettin T.S."/>
            <person name="Das A."/>
            <person name="Ljungdahl L.G."/>
            <person name="Ragsdale S.W."/>
        </authorList>
    </citation>
    <scope>NUCLEOTIDE SEQUENCE [LARGE SCALE GENOMIC DNA]</scope>
    <source>
        <strain>ATCC 39073 / JCM 9320</strain>
    </source>
</reference>
<gene>
    <name evidence="1" type="primary">fmt</name>
    <name type="ordered locus">Moth_0898</name>
</gene>
<dbReference type="EC" id="2.1.2.9" evidence="1"/>
<dbReference type="EMBL" id="CP000232">
    <property type="protein sequence ID" value="ABC19215.1"/>
    <property type="molecule type" value="Genomic_DNA"/>
</dbReference>
<dbReference type="RefSeq" id="YP_429758.1">
    <property type="nucleotide sequence ID" value="NC_007644.1"/>
</dbReference>
<dbReference type="SMR" id="Q2RK24"/>
<dbReference type="STRING" id="264732.Moth_0898"/>
<dbReference type="EnsemblBacteria" id="ABC19215">
    <property type="protein sequence ID" value="ABC19215"/>
    <property type="gene ID" value="Moth_0898"/>
</dbReference>
<dbReference type="KEGG" id="mta:Moth_0898"/>
<dbReference type="PATRIC" id="fig|264732.11.peg.966"/>
<dbReference type="eggNOG" id="COG0223">
    <property type="taxonomic scope" value="Bacteria"/>
</dbReference>
<dbReference type="HOGENOM" id="CLU_033347_1_1_9"/>
<dbReference type="OrthoDB" id="9802815at2"/>
<dbReference type="GO" id="GO:0005829">
    <property type="term" value="C:cytosol"/>
    <property type="evidence" value="ECO:0007669"/>
    <property type="project" value="TreeGrafter"/>
</dbReference>
<dbReference type="GO" id="GO:0004479">
    <property type="term" value="F:methionyl-tRNA formyltransferase activity"/>
    <property type="evidence" value="ECO:0007669"/>
    <property type="project" value="UniProtKB-UniRule"/>
</dbReference>
<dbReference type="CDD" id="cd08646">
    <property type="entry name" value="FMT_core_Met-tRNA-FMT_N"/>
    <property type="match status" value="1"/>
</dbReference>
<dbReference type="CDD" id="cd08704">
    <property type="entry name" value="Met_tRNA_FMT_C"/>
    <property type="match status" value="1"/>
</dbReference>
<dbReference type="FunFam" id="3.40.50.12230:FF:000001">
    <property type="entry name" value="Methionyl-tRNA formyltransferase"/>
    <property type="match status" value="1"/>
</dbReference>
<dbReference type="Gene3D" id="3.40.50.12230">
    <property type="match status" value="1"/>
</dbReference>
<dbReference type="HAMAP" id="MF_00182">
    <property type="entry name" value="Formyl_trans"/>
    <property type="match status" value="1"/>
</dbReference>
<dbReference type="InterPro" id="IPR005794">
    <property type="entry name" value="Fmt"/>
</dbReference>
<dbReference type="InterPro" id="IPR005793">
    <property type="entry name" value="Formyl_trans_C"/>
</dbReference>
<dbReference type="InterPro" id="IPR002376">
    <property type="entry name" value="Formyl_transf_N"/>
</dbReference>
<dbReference type="InterPro" id="IPR036477">
    <property type="entry name" value="Formyl_transf_N_sf"/>
</dbReference>
<dbReference type="InterPro" id="IPR011034">
    <property type="entry name" value="Formyl_transferase-like_C_sf"/>
</dbReference>
<dbReference type="InterPro" id="IPR044135">
    <property type="entry name" value="Met-tRNA-FMT_C"/>
</dbReference>
<dbReference type="InterPro" id="IPR041711">
    <property type="entry name" value="Met-tRNA-FMT_N"/>
</dbReference>
<dbReference type="NCBIfam" id="TIGR00460">
    <property type="entry name" value="fmt"/>
    <property type="match status" value="1"/>
</dbReference>
<dbReference type="PANTHER" id="PTHR11138">
    <property type="entry name" value="METHIONYL-TRNA FORMYLTRANSFERASE"/>
    <property type="match status" value="1"/>
</dbReference>
<dbReference type="PANTHER" id="PTHR11138:SF5">
    <property type="entry name" value="METHIONYL-TRNA FORMYLTRANSFERASE, MITOCHONDRIAL"/>
    <property type="match status" value="1"/>
</dbReference>
<dbReference type="Pfam" id="PF02911">
    <property type="entry name" value="Formyl_trans_C"/>
    <property type="match status" value="1"/>
</dbReference>
<dbReference type="Pfam" id="PF00551">
    <property type="entry name" value="Formyl_trans_N"/>
    <property type="match status" value="1"/>
</dbReference>
<dbReference type="SUPFAM" id="SSF50486">
    <property type="entry name" value="FMT C-terminal domain-like"/>
    <property type="match status" value="1"/>
</dbReference>
<dbReference type="SUPFAM" id="SSF53328">
    <property type="entry name" value="Formyltransferase"/>
    <property type="match status" value="1"/>
</dbReference>
<feature type="chain" id="PRO_1000077306" description="Methionyl-tRNA formyltransferase">
    <location>
        <begin position="1"/>
        <end position="311"/>
    </location>
</feature>
<feature type="binding site" evidence="1">
    <location>
        <begin position="109"/>
        <end position="112"/>
    </location>
    <ligand>
        <name>(6S)-5,6,7,8-tetrahydrofolate</name>
        <dbReference type="ChEBI" id="CHEBI:57453"/>
    </ligand>
</feature>
<comment type="function">
    <text evidence="1">Attaches a formyl group to the free amino group of methionyl-tRNA(fMet). The formyl group appears to play a dual role in the initiator identity of N-formylmethionyl-tRNA by promoting its recognition by IF2 and preventing the misappropriation of this tRNA by the elongation apparatus.</text>
</comment>
<comment type="catalytic activity">
    <reaction evidence="1">
        <text>L-methionyl-tRNA(fMet) + (6R)-10-formyltetrahydrofolate = N-formyl-L-methionyl-tRNA(fMet) + (6S)-5,6,7,8-tetrahydrofolate + H(+)</text>
        <dbReference type="Rhea" id="RHEA:24380"/>
        <dbReference type="Rhea" id="RHEA-COMP:9952"/>
        <dbReference type="Rhea" id="RHEA-COMP:9953"/>
        <dbReference type="ChEBI" id="CHEBI:15378"/>
        <dbReference type="ChEBI" id="CHEBI:57453"/>
        <dbReference type="ChEBI" id="CHEBI:78530"/>
        <dbReference type="ChEBI" id="CHEBI:78844"/>
        <dbReference type="ChEBI" id="CHEBI:195366"/>
        <dbReference type="EC" id="2.1.2.9"/>
    </reaction>
</comment>
<comment type="similarity">
    <text evidence="1">Belongs to the Fmt family.</text>
</comment>